<dbReference type="EMBL" id="CP000142">
    <property type="protein sequence ID" value="ABA87813.1"/>
    <property type="molecule type" value="Genomic_DNA"/>
</dbReference>
<dbReference type="RefSeq" id="WP_011340251.1">
    <property type="nucleotide sequence ID" value="NC_007498.2"/>
</dbReference>
<dbReference type="SMR" id="Q3A734"/>
<dbReference type="STRING" id="338963.Pcar_0553"/>
<dbReference type="KEGG" id="pca:Pcar_0553"/>
<dbReference type="eggNOG" id="COG0322">
    <property type="taxonomic scope" value="Bacteria"/>
</dbReference>
<dbReference type="HOGENOM" id="CLU_014841_3_2_7"/>
<dbReference type="OrthoDB" id="9804933at2"/>
<dbReference type="Proteomes" id="UP000002534">
    <property type="component" value="Chromosome"/>
</dbReference>
<dbReference type="GO" id="GO:0005737">
    <property type="term" value="C:cytoplasm"/>
    <property type="evidence" value="ECO:0007669"/>
    <property type="project" value="UniProtKB-SubCell"/>
</dbReference>
<dbReference type="GO" id="GO:0009380">
    <property type="term" value="C:excinuclease repair complex"/>
    <property type="evidence" value="ECO:0007669"/>
    <property type="project" value="InterPro"/>
</dbReference>
<dbReference type="GO" id="GO:0003677">
    <property type="term" value="F:DNA binding"/>
    <property type="evidence" value="ECO:0007669"/>
    <property type="project" value="UniProtKB-UniRule"/>
</dbReference>
<dbReference type="GO" id="GO:0009381">
    <property type="term" value="F:excinuclease ABC activity"/>
    <property type="evidence" value="ECO:0007669"/>
    <property type="project" value="UniProtKB-UniRule"/>
</dbReference>
<dbReference type="GO" id="GO:0006289">
    <property type="term" value="P:nucleotide-excision repair"/>
    <property type="evidence" value="ECO:0007669"/>
    <property type="project" value="UniProtKB-UniRule"/>
</dbReference>
<dbReference type="GO" id="GO:0009432">
    <property type="term" value="P:SOS response"/>
    <property type="evidence" value="ECO:0007669"/>
    <property type="project" value="UniProtKB-UniRule"/>
</dbReference>
<dbReference type="CDD" id="cd10434">
    <property type="entry name" value="GIY-YIG_UvrC_Cho"/>
    <property type="match status" value="1"/>
</dbReference>
<dbReference type="FunFam" id="3.40.1440.10:FF:000001">
    <property type="entry name" value="UvrABC system protein C"/>
    <property type="match status" value="1"/>
</dbReference>
<dbReference type="Gene3D" id="1.10.150.20">
    <property type="entry name" value="5' to 3' exonuclease, C-terminal subdomain"/>
    <property type="match status" value="1"/>
</dbReference>
<dbReference type="Gene3D" id="3.40.1440.10">
    <property type="entry name" value="GIY-YIG endonuclease"/>
    <property type="match status" value="1"/>
</dbReference>
<dbReference type="Gene3D" id="4.10.860.10">
    <property type="entry name" value="UVR domain"/>
    <property type="match status" value="1"/>
</dbReference>
<dbReference type="Gene3D" id="3.30.420.340">
    <property type="entry name" value="UvrC, RNAse H endonuclease domain"/>
    <property type="match status" value="1"/>
</dbReference>
<dbReference type="HAMAP" id="MF_00203">
    <property type="entry name" value="UvrC"/>
    <property type="match status" value="1"/>
</dbReference>
<dbReference type="InterPro" id="IPR000305">
    <property type="entry name" value="GIY-YIG_endonuc"/>
</dbReference>
<dbReference type="InterPro" id="IPR035901">
    <property type="entry name" value="GIY-YIG_endonuc_sf"/>
</dbReference>
<dbReference type="InterPro" id="IPR047296">
    <property type="entry name" value="GIY-YIG_UvrC_Cho"/>
</dbReference>
<dbReference type="InterPro" id="IPR003583">
    <property type="entry name" value="Hlx-hairpin-Hlx_DNA-bd_motif"/>
</dbReference>
<dbReference type="InterPro" id="IPR010994">
    <property type="entry name" value="RuvA_2-like"/>
</dbReference>
<dbReference type="InterPro" id="IPR001943">
    <property type="entry name" value="UVR_dom"/>
</dbReference>
<dbReference type="InterPro" id="IPR036876">
    <property type="entry name" value="UVR_dom_sf"/>
</dbReference>
<dbReference type="InterPro" id="IPR050066">
    <property type="entry name" value="UvrABC_protein_C"/>
</dbReference>
<dbReference type="InterPro" id="IPR004791">
    <property type="entry name" value="UvrC"/>
</dbReference>
<dbReference type="InterPro" id="IPR001162">
    <property type="entry name" value="UvrC_RNase_H_dom"/>
</dbReference>
<dbReference type="InterPro" id="IPR038476">
    <property type="entry name" value="UvrC_RNase_H_dom_sf"/>
</dbReference>
<dbReference type="NCBIfam" id="NF001824">
    <property type="entry name" value="PRK00558.1-5"/>
    <property type="match status" value="1"/>
</dbReference>
<dbReference type="NCBIfam" id="TIGR00194">
    <property type="entry name" value="uvrC"/>
    <property type="match status" value="1"/>
</dbReference>
<dbReference type="PANTHER" id="PTHR30562:SF1">
    <property type="entry name" value="UVRABC SYSTEM PROTEIN C"/>
    <property type="match status" value="1"/>
</dbReference>
<dbReference type="PANTHER" id="PTHR30562">
    <property type="entry name" value="UVRC/OXIDOREDUCTASE"/>
    <property type="match status" value="1"/>
</dbReference>
<dbReference type="Pfam" id="PF01541">
    <property type="entry name" value="GIY-YIG"/>
    <property type="match status" value="1"/>
</dbReference>
<dbReference type="Pfam" id="PF14520">
    <property type="entry name" value="HHH_5"/>
    <property type="match status" value="1"/>
</dbReference>
<dbReference type="Pfam" id="PF02151">
    <property type="entry name" value="UVR"/>
    <property type="match status" value="1"/>
</dbReference>
<dbReference type="Pfam" id="PF22920">
    <property type="entry name" value="UvrC_RNaseH"/>
    <property type="match status" value="1"/>
</dbReference>
<dbReference type="Pfam" id="PF08459">
    <property type="entry name" value="UvrC_RNaseH_dom"/>
    <property type="match status" value="1"/>
</dbReference>
<dbReference type="SMART" id="SM00465">
    <property type="entry name" value="GIYc"/>
    <property type="match status" value="1"/>
</dbReference>
<dbReference type="SMART" id="SM00278">
    <property type="entry name" value="HhH1"/>
    <property type="match status" value="2"/>
</dbReference>
<dbReference type="SUPFAM" id="SSF46600">
    <property type="entry name" value="C-terminal UvrC-binding domain of UvrB"/>
    <property type="match status" value="1"/>
</dbReference>
<dbReference type="SUPFAM" id="SSF82771">
    <property type="entry name" value="GIY-YIG endonuclease"/>
    <property type="match status" value="1"/>
</dbReference>
<dbReference type="SUPFAM" id="SSF47781">
    <property type="entry name" value="RuvA domain 2-like"/>
    <property type="match status" value="1"/>
</dbReference>
<dbReference type="PROSITE" id="PS50164">
    <property type="entry name" value="GIY_YIG"/>
    <property type="match status" value="1"/>
</dbReference>
<dbReference type="PROSITE" id="PS50151">
    <property type="entry name" value="UVR"/>
    <property type="match status" value="1"/>
</dbReference>
<dbReference type="PROSITE" id="PS50165">
    <property type="entry name" value="UVRC"/>
    <property type="match status" value="1"/>
</dbReference>
<reference key="1">
    <citation type="submission" date="2005-10" db="EMBL/GenBank/DDBJ databases">
        <title>Complete sequence of Pelobacter carbinolicus DSM 2380.</title>
        <authorList>
            <person name="Copeland A."/>
            <person name="Lucas S."/>
            <person name="Lapidus A."/>
            <person name="Barry K."/>
            <person name="Detter J.C."/>
            <person name="Glavina T."/>
            <person name="Hammon N."/>
            <person name="Israni S."/>
            <person name="Pitluck S."/>
            <person name="Chertkov O."/>
            <person name="Schmutz J."/>
            <person name="Larimer F."/>
            <person name="Land M."/>
            <person name="Kyrpides N."/>
            <person name="Ivanova N."/>
            <person name="Richardson P."/>
        </authorList>
    </citation>
    <scope>NUCLEOTIDE SEQUENCE [LARGE SCALE GENOMIC DNA]</scope>
    <source>
        <strain>DSM 2380 / NBRC 103641 / GraBd1</strain>
    </source>
</reference>
<comment type="function">
    <text evidence="1">The UvrABC repair system catalyzes the recognition and processing of DNA lesions. UvrC both incises the 5' and 3' sides of the lesion. The N-terminal half is responsible for the 3' incision and the C-terminal half is responsible for the 5' incision.</text>
</comment>
<comment type="subunit">
    <text evidence="1">Interacts with UvrB in an incision complex.</text>
</comment>
<comment type="subcellular location">
    <subcellularLocation>
        <location evidence="1">Cytoplasm</location>
    </subcellularLocation>
</comment>
<comment type="similarity">
    <text evidence="1">Belongs to the UvrC family.</text>
</comment>
<organism>
    <name type="scientific">Syntrophotalea carbinolica (strain DSM 2380 / NBRC 103641 / GraBd1)</name>
    <name type="common">Pelobacter carbinolicus</name>
    <dbReference type="NCBI Taxonomy" id="338963"/>
    <lineage>
        <taxon>Bacteria</taxon>
        <taxon>Pseudomonadati</taxon>
        <taxon>Thermodesulfobacteriota</taxon>
        <taxon>Desulfuromonadia</taxon>
        <taxon>Desulfuromonadales</taxon>
        <taxon>Syntrophotaleaceae</taxon>
        <taxon>Syntrophotalea</taxon>
    </lineage>
</organism>
<feature type="chain" id="PRO_0000227455" description="UvrABC system protein C">
    <location>
        <begin position="1"/>
        <end position="612"/>
    </location>
</feature>
<feature type="domain" description="GIY-YIG" evidence="1">
    <location>
        <begin position="11"/>
        <end position="90"/>
    </location>
</feature>
<feature type="domain" description="UVR" evidence="1">
    <location>
        <begin position="200"/>
        <end position="235"/>
    </location>
</feature>
<gene>
    <name evidence="1" type="primary">uvrC</name>
    <name type="ordered locus">Pcar_0553</name>
</gene>
<accession>Q3A734</accession>
<evidence type="ECO:0000255" key="1">
    <source>
        <dbReference type="HAMAP-Rule" id="MF_00203"/>
    </source>
</evidence>
<name>UVRC_SYNC1</name>
<protein>
    <recommendedName>
        <fullName evidence="1">UvrABC system protein C</fullName>
        <shortName evidence="1">Protein UvrC</shortName>
    </recommendedName>
    <alternativeName>
        <fullName evidence="1">Excinuclease ABC subunit C</fullName>
    </alternativeName>
</protein>
<sequence length="612" mass="70015">MFTFEAAKYPTASGVYLMKGEAGTVFYVGKAKNLRSRLRSYFSEHGDNRPQIRFLLKRVHDIETIVTDTEKEALILENTLIKKYRPRYNINLRDDKTYLSLRLDPRQEFPMLQLVRRVRRDGALYFGPYASSTAVRATLQEIYRIFPLRRHPWESCRSRSRPCLYYQIGQCSAPCHGKISAEDYQRLVDGALALLAGRESEVVESLQHQMAAAAERMAFEEAARLRDQLRAIEQTVERQKVVEAGGGDQDVVGLHREGGEVELAILFVREGKVIDRRSYNLEWRLDEEELLSTFLQRFYGRDVCIPDRVLLPFLPEGSEVLAEWLSEQRGKKVQVLAPLRGTRRKLVALAARNAEESFRERGSRREARQGVLEEIARRLHLTRFPHRIECFDISNVQGRFSVGSMAVLSDGEPDKGAYRHFRIRSVEGSDDYASLYEVLRRRLERGLREESLPDFILMDGGKGQLNIVCTVLDELNLTGRIDVAGIAKSRVMANVRGKAVERSEERFFLPGRKNSVNLRQGSPALFMLERLRDEAHRFAITHHRKLRRRSTLGSVLEEIPGVGEKRRKALLKHFGSLKAVQAASLDELRAMPGLPAALAERIHAAFQERKTS</sequence>
<keyword id="KW-0963">Cytoplasm</keyword>
<keyword id="KW-0227">DNA damage</keyword>
<keyword id="KW-0228">DNA excision</keyword>
<keyword id="KW-0234">DNA repair</keyword>
<keyword id="KW-0267">Excision nuclease</keyword>
<keyword id="KW-1185">Reference proteome</keyword>
<keyword id="KW-0742">SOS response</keyword>
<proteinExistence type="inferred from homology"/>